<dbReference type="SMR" id="P0DN54"/>
<dbReference type="GO" id="GO:0005576">
    <property type="term" value="C:extracellular region"/>
    <property type="evidence" value="ECO:0007669"/>
    <property type="project" value="UniProtKB-SubCell"/>
</dbReference>
<dbReference type="GO" id="GO:0090729">
    <property type="term" value="F:toxin activity"/>
    <property type="evidence" value="ECO:0007669"/>
    <property type="project" value="UniProtKB-KW"/>
</dbReference>
<sequence length="80" mass="8804">MAINGRLLCLCLVLGLVFESLGHPSVQEKRAAEDSKPSGERRQTLTTKHEVDCGGIPCQFGCCENDKCRELDCEHYPGIP</sequence>
<proteinExistence type="inferred from homology"/>
<feature type="signal peptide" evidence="1">
    <location>
        <begin position="1"/>
        <end position="21"/>
    </location>
</feature>
<feature type="propeptide" id="PRO_0000435074" evidence="3">
    <location>
        <begin position="22"/>
        <end position="42"/>
    </location>
</feature>
<feature type="chain" id="PRO_0000435075" description="Teretoxin Tsu6.5">
    <location>
        <begin position="43"/>
        <end position="80"/>
    </location>
</feature>
<name>T65_TERSU</name>
<comment type="subcellular location">
    <subcellularLocation>
        <location evidence="4">Secreted</location>
    </subcellularLocation>
</comment>
<comment type="tissue specificity">
    <text evidence="4">Expressed by the venom duct.</text>
</comment>
<comment type="domain">
    <text>The cysteine framework is VI/VII (C-C-CC-C-C).</text>
</comment>
<comment type="PTM">
    <text evidence="3">Contains 3 disulfide bonds.</text>
</comment>
<comment type="similarity">
    <text>Belongs to the teretoxin M (TM) superfamily.</text>
</comment>
<keyword id="KW-0165">Cleavage on pair of basic residues</keyword>
<keyword id="KW-1015">Disulfide bond</keyword>
<keyword id="KW-0964">Secreted</keyword>
<keyword id="KW-0732">Signal</keyword>
<keyword id="KW-0800">Toxin</keyword>
<evidence type="ECO:0000255" key="1"/>
<evidence type="ECO:0000303" key="2">
    <source>
    </source>
</evidence>
<evidence type="ECO:0000305" key="3"/>
<evidence type="ECO:0000305" key="4">
    <source>
    </source>
</evidence>
<reference key="1">
    <citation type="journal article" date="2015" name="Genome Biol. Evol.">
        <title>Molecular diversity and gene evolution of the venom arsenal of Terebridae predatory marine snails.</title>
        <authorList>
            <person name="Gorson J."/>
            <person name="Ramrattan G."/>
            <person name="Verdes A."/>
            <person name="Wright E.M."/>
            <person name="Kantor Y."/>
            <person name="Rajaram Srinivasan R."/>
            <person name="Musunuri R."/>
            <person name="Packer D."/>
            <person name="Albano G."/>
            <person name="Qiu W.G."/>
            <person name="Holford M."/>
        </authorList>
    </citation>
    <scope>NUCLEOTIDE SEQUENCE [MRNA]</scope>
    <source>
        <tissue>Venom duct</tissue>
    </source>
</reference>
<organism>
    <name type="scientific">Terebra subulata</name>
    <name type="common">Chocolate spotted auger</name>
    <name type="synonym">Buccinum subulatum</name>
    <dbReference type="NCBI Taxonomy" id="89435"/>
    <lineage>
        <taxon>Eukaryota</taxon>
        <taxon>Metazoa</taxon>
        <taxon>Spiralia</taxon>
        <taxon>Lophotrochozoa</taxon>
        <taxon>Mollusca</taxon>
        <taxon>Gastropoda</taxon>
        <taxon>Caenogastropoda</taxon>
        <taxon>Neogastropoda</taxon>
        <taxon>Conoidea</taxon>
        <taxon>Terebridae</taxon>
        <taxon>Terebra</taxon>
    </lineage>
</organism>
<accession>P0DN54</accession>
<protein>
    <recommendedName>
        <fullName evidence="2">Teretoxin Tsu6.5</fullName>
    </recommendedName>
</protein>